<dbReference type="EMBL" id="AF154075">
    <property type="protein sequence ID" value="AAD38187.1"/>
    <property type="molecule type" value="Genomic_DNA"/>
</dbReference>
<dbReference type="EMBL" id="AM040264">
    <property type="protein sequence ID" value="CAJ11090.1"/>
    <property type="molecule type" value="Genomic_DNA"/>
</dbReference>
<dbReference type="RefSeq" id="WP_002964239.1">
    <property type="nucleotide sequence ID" value="NZ_KN046823.1"/>
</dbReference>
<dbReference type="SMR" id="Q2YPW9"/>
<dbReference type="STRING" id="359391.BAB1_1134"/>
<dbReference type="GeneID" id="97533634"/>
<dbReference type="KEGG" id="bmf:BAB1_1134"/>
<dbReference type="PATRIC" id="fig|359391.11.peg.34"/>
<dbReference type="HOGENOM" id="CLU_113688_0_0_5"/>
<dbReference type="PRO" id="PR:Q2YPW9"/>
<dbReference type="Proteomes" id="UP000002719">
    <property type="component" value="Chromosome I"/>
</dbReference>
<dbReference type="GO" id="GO:0005829">
    <property type="term" value="C:cytosol"/>
    <property type="evidence" value="ECO:0007669"/>
    <property type="project" value="TreeGrafter"/>
</dbReference>
<dbReference type="GO" id="GO:0003723">
    <property type="term" value="F:RNA binding"/>
    <property type="evidence" value="ECO:0007669"/>
    <property type="project" value="UniProtKB-UniRule"/>
</dbReference>
<dbReference type="GO" id="GO:0006355">
    <property type="term" value="P:regulation of DNA-templated transcription"/>
    <property type="evidence" value="ECO:0007669"/>
    <property type="project" value="InterPro"/>
</dbReference>
<dbReference type="GO" id="GO:0043487">
    <property type="term" value="P:regulation of RNA stability"/>
    <property type="evidence" value="ECO:0007669"/>
    <property type="project" value="TreeGrafter"/>
</dbReference>
<dbReference type="GO" id="GO:0045974">
    <property type="term" value="P:regulation of translation, ncRNA-mediated"/>
    <property type="evidence" value="ECO:0007669"/>
    <property type="project" value="TreeGrafter"/>
</dbReference>
<dbReference type="CDD" id="cd01716">
    <property type="entry name" value="Hfq"/>
    <property type="match status" value="1"/>
</dbReference>
<dbReference type="Gene3D" id="2.30.30.100">
    <property type="match status" value="1"/>
</dbReference>
<dbReference type="HAMAP" id="MF_00436">
    <property type="entry name" value="Hfq"/>
    <property type="match status" value="1"/>
</dbReference>
<dbReference type="InterPro" id="IPR005001">
    <property type="entry name" value="Hfq"/>
</dbReference>
<dbReference type="InterPro" id="IPR010920">
    <property type="entry name" value="LSM_dom_sf"/>
</dbReference>
<dbReference type="InterPro" id="IPR047575">
    <property type="entry name" value="Sm"/>
</dbReference>
<dbReference type="NCBIfam" id="TIGR02383">
    <property type="entry name" value="Hfq"/>
    <property type="match status" value="1"/>
</dbReference>
<dbReference type="NCBIfam" id="NF001602">
    <property type="entry name" value="PRK00395.1"/>
    <property type="match status" value="1"/>
</dbReference>
<dbReference type="PANTHER" id="PTHR34772">
    <property type="entry name" value="RNA-BINDING PROTEIN HFQ"/>
    <property type="match status" value="1"/>
</dbReference>
<dbReference type="PANTHER" id="PTHR34772:SF1">
    <property type="entry name" value="RNA-BINDING PROTEIN HFQ"/>
    <property type="match status" value="1"/>
</dbReference>
<dbReference type="Pfam" id="PF17209">
    <property type="entry name" value="Hfq"/>
    <property type="match status" value="1"/>
</dbReference>
<dbReference type="SUPFAM" id="SSF50182">
    <property type="entry name" value="Sm-like ribonucleoproteins"/>
    <property type="match status" value="1"/>
</dbReference>
<dbReference type="PROSITE" id="PS52002">
    <property type="entry name" value="SM"/>
    <property type="match status" value="1"/>
</dbReference>
<proteinExistence type="evidence at protein level"/>
<sequence length="78" mass="8854">MAERSQNLQDLFLNSVRKQKISLTIFLINGVKLTGIVTSFDNFCVLLRRDGHSQLVYKHAISTIMPSQPVQMFEGEEA</sequence>
<protein>
    <recommendedName>
        <fullName evidence="1">RNA-binding protein Hfq</fullName>
    </recommendedName>
</protein>
<accession>Q2YPW9</accession>
<accession>P0A3G9</accession>
<accession>Q57D26</accession>
<accession>Q9XBW1</accession>
<evidence type="ECO:0000255" key="1">
    <source>
        <dbReference type="HAMAP-Rule" id="MF_00436"/>
    </source>
</evidence>
<evidence type="ECO:0000255" key="2">
    <source>
        <dbReference type="PROSITE-ProRule" id="PRU01346"/>
    </source>
</evidence>
<evidence type="ECO:0000269" key="3">
    <source>
    </source>
</evidence>
<feature type="chain" id="PRO_0000095628" description="RNA-binding protein Hfq">
    <location>
        <begin position="1"/>
        <end position="78"/>
    </location>
</feature>
<feature type="domain" description="Sm" evidence="2">
    <location>
        <begin position="10"/>
        <end position="70"/>
    </location>
</feature>
<organism>
    <name type="scientific">Brucella abortus (strain 2308)</name>
    <dbReference type="NCBI Taxonomy" id="359391"/>
    <lineage>
        <taxon>Bacteria</taxon>
        <taxon>Pseudomonadati</taxon>
        <taxon>Pseudomonadota</taxon>
        <taxon>Alphaproteobacteria</taxon>
        <taxon>Hyphomicrobiales</taxon>
        <taxon>Brucellaceae</taxon>
        <taxon>Brucella/Ochrobactrum group</taxon>
        <taxon>Brucella</taxon>
    </lineage>
</organism>
<reference key="1">
    <citation type="journal article" date="1999" name="Mol. Microbiol.">
        <title>The Brucella abortus host factor I (HF-I) protein contributes to stress resistance during stationary phase and is a major determinant of virulence in mice.</title>
        <authorList>
            <person name="Robertson G.T."/>
            <person name="Roop R.M. Jr."/>
        </authorList>
    </citation>
    <scope>NUCLEOTIDE SEQUENCE [GENOMIC DNA]</scope>
    <scope>FUNCTION IN STRESS RESISTANCE PATHOGENESIS</scope>
    <scope>DISRUPTION PHENOTYPE</scope>
</reference>
<reference key="2">
    <citation type="journal article" date="2005" name="Infect. Immun.">
        <title>Whole-genome analyses of speciation events in pathogenic Brucellae.</title>
        <authorList>
            <person name="Chain P.S."/>
            <person name="Comerci D.J."/>
            <person name="Tolmasky M.E."/>
            <person name="Larimer F.W."/>
            <person name="Malfatti S.A."/>
            <person name="Vergez L.M."/>
            <person name="Aguero F."/>
            <person name="Land M.L."/>
            <person name="Ugalde R.A."/>
            <person name="Garcia E."/>
        </authorList>
    </citation>
    <scope>NUCLEOTIDE SEQUENCE [LARGE SCALE GENOMIC DNA]</scope>
    <source>
        <strain>2308</strain>
    </source>
</reference>
<keyword id="KW-1185">Reference proteome</keyword>
<keyword id="KW-0694">RNA-binding</keyword>
<keyword id="KW-0346">Stress response</keyword>
<keyword id="KW-0843">Virulence</keyword>
<gene>
    <name evidence="1" type="primary">hfq</name>
    <name type="ordered locus">BAB1_1134</name>
</gene>
<comment type="function">
    <text evidence="1 3">RNA chaperone that binds small regulatory RNA (sRNAs) and mRNAs to facilitate mRNA translational regulation in response to envelope stress, environmental stress and changes in metabolite concentrations. Also binds with high specificity to tRNAs (By similarity). Contributes to long-term survival under nutrient deprivation, to stationary phase-dependent hydrogen peroxide and acid stress resistance and is required for prolonged survival in the intracellular environment of the host macrophage. Therefore, contributes not only to a generalized stress response in stationary phase but also to pathogenesis in mice, allowing the brucellae to adapt to the harsh conditions encountered within macrophages.</text>
</comment>
<comment type="disruption phenotype">
    <text evidence="3">Cells show increased sensitivity to hydrogen peroxide and decreased survival at pH 4.0 during stationary phase growth. It is less able to withstand prolonged starvation. It fails to replicate in cultured murine macrophages and is completely cleared from spleens and livers of infected mice 10 weeks after infection.</text>
</comment>
<comment type="similarity">
    <text evidence="1">Belongs to the Hfq family.</text>
</comment>
<name>HFQ_BRUA2</name>